<feature type="chain" id="PRO_0000119191" description="Bifunctional chorismate mutase/prephenate dehydratase">
    <location>
        <begin position="1"/>
        <end position="386"/>
    </location>
</feature>
<feature type="domain" description="Chorismate mutase" evidence="3">
    <location>
        <begin position="1"/>
        <end position="92"/>
    </location>
</feature>
<feature type="domain" description="Prephenate dehydratase" evidence="4">
    <location>
        <begin position="105"/>
        <end position="285"/>
    </location>
</feature>
<feature type="domain" description="ACT" evidence="5">
    <location>
        <begin position="299"/>
        <end position="376"/>
    </location>
</feature>
<feature type="binding site" evidence="1">
    <location>
        <position position="11"/>
    </location>
    <ligand>
        <name>substrate</name>
    </ligand>
</feature>
<feature type="binding site" evidence="1">
    <location>
        <position position="28"/>
    </location>
    <ligand>
        <name>substrate</name>
    </ligand>
</feature>
<feature type="binding site" evidence="1">
    <location>
        <position position="39"/>
    </location>
    <ligand>
        <name>substrate</name>
    </ligand>
</feature>
<feature type="binding site" evidence="1">
    <location>
        <position position="48"/>
    </location>
    <ligand>
        <name>substrate</name>
    </ligand>
</feature>
<feature type="binding site" evidence="1">
    <location>
        <position position="52"/>
    </location>
    <ligand>
        <name>substrate</name>
    </ligand>
</feature>
<feature type="binding site" evidence="1">
    <location>
        <position position="84"/>
    </location>
    <ligand>
        <name>substrate</name>
    </ligand>
</feature>
<feature type="binding site" evidence="1">
    <location>
        <position position="88"/>
    </location>
    <ligand>
        <name>substrate</name>
    </ligand>
</feature>
<feature type="site" description="Essential for prephenate dehydratase activity" evidence="2">
    <location>
        <position position="278"/>
    </location>
</feature>
<comment type="function">
    <text evidence="1">Catalyzes the Claisen rearrangement of chorismate to prephenate and the decarboxylation/dehydration of prephenate to phenylpyruvate.</text>
</comment>
<comment type="catalytic activity">
    <reaction evidence="1">
        <text>chorismate = prephenate</text>
        <dbReference type="Rhea" id="RHEA:13897"/>
        <dbReference type="ChEBI" id="CHEBI:29748"/>
        <dbReference type="ChEBI" id="CHEBI:29934"/>
        <dbReference type="EC" id="5.4.99.5"/>
    </reaction>
</comment>
<comment type="catalytic activity">
    <reaction evidence="1">
        <text>prephenate + H(+) = 3-phenylpyruvate + CO2 + H2O</text>
        <dbReference type="Rhea" id="RHEA:21648"/>
        <dbReference type="ChEBI" id="CHEBI:15377"/>
        <dbReference type="ChEBI" id="CHEBI:15378"/>
        <dbReference type="ChEBI" id="CHEBI:16526"/>
        <dbReference type="ChEBI" id="CHEBI:18005"/>
        <dbReference type="ChEBI" id="CHEBI:29934"/>
        <dbReference type="EC" id="4.2.1.51"/>
    </reaction>
</comment>
<comment type="pathway">
    <text evidence="1">Amino-acid biosynthesis; L-phenylalanine biosynthesis; phenylpyruvate from prephenate: step 1/1.</text>
</comment>
<comment type="pathway">
    <text evidence="1">Metabolic intermediate biosynthesis; prephenate biosynthesis; prephenate from chorismate: step 1/1.</text>
</comment>
<comment type="subcellular location">
    <subcellularLocation>
        <location evidence="1">Cytoplasm</location>
    </subcellularLocation>
</comment>
<sequence>MTSENPLLALREKISALDEKLLALLAERRELAVEVGKAKLLSHRPVRDIDRERDLLERLITLGKAHHLDAHYITRLFQLIIEDSVLTQQALLQQHLNKINPHSARIAFLGPKGSYSHLAARQYAARHFEQFIESGCAKFADIFNQVETGQADYAVVPIENTSSGAINDVYDLLQHTSLSIVGEMTLTIDHCLLVSGTTDLSTINTVYSHPQPFQQCSKFLNRYPHWKIEYTESTSAAMEKVAQAKSPHVAALGSEAGGTLYGLQVLERIEANQRQNFTRFVVLARKAINVSDQVPAKTTLLMATGQQAGALVEALLVLRNHNLIMTRLESRPIHGNPWEEMFYLDIQANLESAEMQKALKELGEITRSMKVLGCYPSENVVPVDPT</sequence>
<proteinExistence type="inferred from homology"/>
<dbReference type="EC" id="5.4.99.5" evidence="1"/>
<dbReference type="EC" id="4.2.1.51" evidence="1"/>
<dbReference type="EMBL" id="AE005674">
    <property type="protein sequence ID" value="AAN44155.1"/>
    <property type="molecule type" value="Genomic_DNA"/>
</dbReference>
<dbReference type="EMBL" id="AE014073">
    <property type="protein sequence ID" value="AAP17980.1"/>
    <property type="molecule type" value="Genomic_DNA"/>
</dbReference>
<dbReference type="RefSeq" id="NP_708448.1">
    <property type="nucleotide sequence ID" value="NC_004337.2"/>
</dbReference>
<dbReference type="RefSeq" id="WP_000200120.1">
    <property type="nucleotide sequence ID" value="NZ_WPGW01000074.1"/>
</dbReference>
<dbReference type="SMR" id="P0A9K0"/>
<dbReference type="STRING" id="198214.SF2659"/>
<dbReference type="PaxDb" id="198214-SF2659"/>
<dbReference type="GeneID" id="1027480"/>
<dbReference type="KEGG" id="sfl:SF2659"/>
<dbReference type="KEGG" id="sfx:S2836"/>
<dbReference type="PATRIC" id="fig|198214.7.peg.3167"/>
<dbReference type="HOGENOM" id="CLU_035008_1_0_6"/>
<dbReference type="UniPathway" id="UPA00120">
    <property type="reaction ID" value="UER00203"/>
</dbReference>
<dbReference type="UniPathway" id="UPA00121">
    <property type="reaction ID" value="UER00345"/>
</dbReference>
<dbReference type="Proteomes" id="UP000001006">
    <property type="component" value="Chromosome"/>
</dbReference>
<dbReference type="Proteomes" id="UP000002673">
    <property type="component" value="Chromosome"/>
</dbReference>
<dbReference type="GO" id="GO:0005737">
    <property type="term" value="C:cytoplasm"/>
    <property type="evidence" value="ECO:0007669"/>
    <property type="project" value="UniProtKB-SubCell"/>
</dbReference>
<dbReference type="GO" id="GO:0004106">
    <property type="term" value="F:chorismate mutase activity"/>
    <property type="evidence" value="ECO:0007669"/>
    <property type="project" value="UniProtKB-EC"/>
</dbReference>
<dbReference type="GO" id="GO:0004664">
    <property type="term" value="F:prephenate dehydratase activity"/>
    <property type="evidence" value="ECO:0007669"/>
    <property type="project" value="UniProtKB-EC"/>
</dbReference>
<dbReference type="GO" id="GO:0046417">
    <property type="term" value="P:chorismate metabolic process"/>
    <property type="evidence" value="ECO:0007669"/>
    <property type="project" value="InterPro"/>
</dbReference>
<dbReference type="GO" id="GO:0009094">
    <property type="term" value="P:L-phenylalanine biosynthetic process"/>
    <property type="evidence" value="ECO:0007669"/>
    <property type="project" value="UniProtKB-UniPathway"/>
</dbReference>
<dbReference type="CDD" id="cd04905">
    <property type="entry name" value="ACT_CM-PDT"/>
    <property type="match status" value="1"/>
</dbReference>
<dbReference type="CDD" id="cd13631">
    <property type="entry name" value="PBP2_Ct-PDT_like"/>
    <property type="match status" value="1"/>
</dbReference>
<dbReference type="FunFam" id="1.20.59.10:FF:000002">
    <property type="entry name" value="Chorismate mutase/prephenate dehydratase"/>
    <property type="match status" value="1"/>
</dbReference>
<dbReference type="FunFam" id="3.30.70.260:FF:000022">
    <property type="entry name" value="Chorismate mutase/prephenate dehydratase"/>
    <property type="match status" value="1"/>
</dbReference>
<dbReference type="FunFam" id="3.40.190.10:FF:000034">
    <property type="entry name" value="Chorismate mutase/prephenate dehydratase"/>
    <property type="match status" value="1"/>
</dbReference>
<dbReference type="FunFam" id="3.40.190.10:FF:000044">
    <property type="entry name" value="Chorismate mutase/prephenate dehydratase"/>
    <property type="match status" value="1"/>
</dbReference>
<dbReference type="Gene3D" id="3.30.70.260">
    <property type="match status" value="1"/>
</dbReference>
<dbReference type="Gene3D" id="1.20.59.10">
    <property type="entry name" value="Chorismate mutase"/>
    <property type="match status" value="1"/>
</dbReference>
<dbReference type="Gene3D" id="3.40.190.10">
    <property type="entry name" value="Periplasmic binding protein-like II"/>
    <property type="match status" value="2"/>
</dbReference>
<dbReference type="InterPro" id="IPR045865">
    <property type="entry name" value="ACT-like_dom_sf"/>
</dbReference>
<dbReference type="InterPro" id="IPR002912">
    <property type="entry name" value="ACT_dom"/>
</dbReference>
<dbReference type="InterPro" id="IPR008242">
    <property type="entry name" value="Chor_mutase/pphenate_deHydtase"/>
</dbReference>
<dbReference type="InterPro" id="IPR036263">
    <property type="entry name" value="Chorismate_II_sf"/>
</dbReference>
<dbReference type="InterPro" id="IPR036979">
    <property type="entry name" value="CM_dom_sf"/>
</dbReference>
<dbReference type="InterPro" id="IPR002701">
    <property type="entry name" value="CM_II_prokaryot"/>
</dbReference>
<dbReference type="InterPro" id="IPR010952">
    <property type="entry name" value="CM_P_1"/>
</dbReference>
<dbReference type="InterPro" id="IPR001086">
    <property type="entry name" value="Preph_deHydtase"/>
</dbReference>
<dbReference type="InterPro" id="IPR018528">
    <property type="entry name" value="Preph_deHydtase_CS"/>
</dbReference>
<dbReference type="NCBIfam" id="TIGR01797">
    <property type="entry name" value="CM_P_1"/>
    <property type="match status" value="1"/>
</dbReference>
<dbReference type="NCBIfam" id="NF007910">
    <property type="entry name" value="PRK10622.1"/>
    <property type="match status" value="1"/>
</dbReference>
<dbReference type="NCBIfam" id="NF008865">
    <property type="entry name" value="PRK11898.1"/>
    <property type="match status" value="1"/>
</dbReference>
<dbReference type="PANTHER" id="PTHR21022">
    <property type="entry name" value="PREPHENATE DEHYDRATASE P PROTEIN"/>
    <property type="match status" value="1"/>
</dbReference>
<dbReference type="PANTHER" id="PTHR21022:SF19">
    <property type="entry name" value="PREPHENATE DEHYDRATASE-RELATED"/>
    <property type="match status" value="1"/>
</dbReference>
<dbReference type="Pfam" id="PF01817">
    <property type="entry name" value="CM_2"/>
    <property type="match status" value="1"/>
</dbReference>
<dbReference type="Pfam" id="PF00800">
    <property type="entry name" value="PDT"/>
    <property type="match status" value="1"/>
</dbReference>
<dbReference type="PIRSF" id="PIRSF001500">
    <property type="entry name" value="Chor_mut_pdt_Ppr"/>
    <property type="match status" value="1"/>
</dbReference>
<dbReference type="SMART" id="SM00830">
    <property type="entry name" value="CM_2"/>
    <property type="match status" value="1"/>
</dbReference>
<dbReference type="SUPFAM" id="SSF55021">
    <property type="entry name" value="ACT-like"/>
    <property type="match status" value="1"/>
</dbReference>
<dbReference type="SUPFAM" id="SSF48600">
    <property type="entry name" value="Chorismate mutase II"/>
    <property type="match status" value="1"/>
</dbReference>
<dbReference type="SUPFAM" id="SSF53850">
    <property type="entry name" value="Periplasmic binding protein-like II"/>
    <property type="match status" value="1"/>
</dbReference>
<dbReference type="PROSITE" id="PS51671">
    <property type="entry name" value="ACT"/>
    <property type="match status" value="1"/>
</dbReference>
<dbReference type="PROSITE" id="PS51168">
    <property type="entry name" value="CHORISMATE_MUT_2"/>
    <property type="match status" value="1"/>
</dbReference>
<dbReference type="PROSITE" id="PS00857">
    <property type="entry name" value="PREPHENATE_DEHYDR_1"/>
    <property type="match status" value="1"/>
</dbReference>
<dbReference type="PROSITE" id="PS00858">
    <property type="entry name" value="PREPHENATE_DEHYDR_2"/>
    <property type="match status" value="1"/>
</dbReference>
<dbReference type="PROSITE" id="PS51171">
    <property type="entry name" value="PREPHENATE_DEHYDR_3"/>
    <property type="match status" value="1"/>
</dbReference>
<accession>P0A9K0</accession>
<accession>P07022</accession>
<accession>P78204</accession>
<gene>
    <name type="primary">pheA</name>
    <name type="ordered locus">SF2659</name>
    <name type="ordered locus">S2836</name>
</gene>
<organism>
    <name type="scientific">Shigella flexneri</name>
    <dbReference type="NCBI Taxonomy" id="623"/>
    <lineage>
        <taxon>Bacteria</taxon>
        <taxon>Pseudomonadati</taxon>
        <taxon>Pseudomonadota</taxon>
        <taxon>Gammaproteobacteria</taxon>
        <taxon>Enterobacterales</taxon>
        <taxon>Enterobacteriaceae</taxon>
        <taxon>Shigella</taxon>
    </lineage>
</organism>
<evidence type="ECO:0000250" key="1">
    <source>
        <dbReference type="UniProtKB" id="P0A9J8"/>
    </source>
</evidence>
<evidence type="ECO:0000255" key="2"/>
<evidence type="ECO:0000255" key="3">
    <source>
        <dbReference type="PROSITE-ProRule" id="PRU00515"/>
    </source>
</evidence>
<evidence type="ECO:0000255" key="4">
    <source>
        <dbReference type="PROSITE-ProRule" id="PRU00517"/>
    </source>
</evidence>
<evidence type="ECO:0000255" key="5">
    <source>
        <dbReference type="PROSITE-ProRule" id="PRU01007"/>
    </source>
</evidence>
<protein>
    <recommendedName>
        <fullName evidence="1">Bifunctional chorismate mutase/prephenate dehydratase</fullName>
    </recommendedName>
    <alternativeName>
        <fullName evidence="1">Chorismate mutase-prephenate dehydratase</fullName>
    </alternativeName>
    <alternativeName>
        <fullName evidence="1">P-protein</fullName>
    </alternativeName>
    <domain>
        <recommendedName>
            <fullName evidence="1">Chorismate mutase</fullName>
            <shortName evidence="1">CM</shortName>
            <ecNumber evidence="1">5.4.99.5</ecNumber>
        </recommendedName>
    </domain>
    <domain>
        <recommendedName>
            <fullName evidence="1">Prephenate dehydratase</fullName>
            <shortName evidence="1">PDT</shortName>
            <ecNumber evidence="1">4.2.1.51</ecNumber>
        </recommendedName>
    </domain>
</protein>
<keyword id="KW-0028">Amino-acid biosynthesis</keyword>
<keyword id="KW-0057">Aromatic amino acid biosynthesis</keyword>
<keyword id="KW-0963">Cytoplasm</keyword>
<keyword id="KW-0413">Isomerase</keyword>
<keyword id="KW-0456">Lyase</keyword>
<keyword id="KW-0511">Multifunctional enzyme</keyword>
<keyword id="KW-0584">Phenylalanine biosynthesis</keyword>
<keyword id="KW-1185">Reference proteome</keyword>
<name>CMPDT_SHIFL</name>
<reference key="1">
    <citation type="journal article" date="2002" name="Nucleic Acids Res.">
        <title>Genome sequence of Shigella flexneri 2a: insights into pathogenicity through comparison with genomes of Escherichia coli K12 and O157.</title>
        <authorList>
            <person name="Jin Q."/>
            <person name="Yuan Z."/>
            <person name="Xu J."/>
            <person name="Wang Y."/>
            <person name="Shen Y."/>
            <person name="Lu W."/>
            <person name="Wang J."/>
            <person name="Liu H."/>
            <person name="Yang J."/>
            <person name="Yang F."/>
            <person name="Zhang X."/>
            <person name="Zhang J."/>
            <person name="Yang G."/>
            <person name="Wu H."/>
            <person name="Qu D."/>
            <person name="Dong J."/>
            <person name="Sun L."/>
            <person name="Xue Y."/>
            <person name="Zhao A."/>
            <person name="Gao Y."/>
            <person name="Zhu J."/>
            <person name="Kan B."/>
            <person name="Ding K."/>
            <person name="Chen S."/>
            <person name="Cheng H."/>
            <person name="Yao Z."/>
            <person name="He B."/>
            <person name="Chen R."/>
            <person name="Ma D."/>
            <person name="Qiang B."/>
            <person name="Wen Y."/>
            <person name="Hou Y."/>
            <person name="Yu J."/>
        </authorList>
    </citation>
    <scope>NUCLEOTIDE SEQUENCE [LARGE SCALE GENOMIC DNA]</scope>
    <source>
        <strain>301 / Serotype 2a</strain>
    </source>
</reference>
<reference key="2">
    <citation type="journal article" date="2003" name="Infect. Immun.">
        <title>Complete genome sequence and comparative genomics of Shigella flexneri serotype 2a strain 2457T.</title>
        <authorList>
            <person name="Wei J."/>
            <person name="Goldberg M.B."/>
            <person name="Burland V."/>
            <person name="Venkatesan M.M."/>
            <person name="Deng W."/>
            <person name="Fournier G."/>
            <person name="Mayhew G.F."/>
            <person name="Plunkett G. III"/>
            <person name="Rose D.J."/>
            <person name="Darling A."/>
            <person name="Mau B."/>
            <person name="Perna N.T."/>
            <person name="Payne S.M."/>
            <person name="Runyen-Janecky L.J."/>
            <person name="Zhou S."/>
            <person name="Schwartz D.C."/>
            <person name="Blattner F.R."/>
        </authorList>
    </citation>
    <scope>NUCLEOTIDE SEQUENCE [LARGE SCALE GENOMIC DNA]</scope>
    <source>
        <strain>ATCC 700930 / 2457T / Serotype 2a</strain>
    </source>
</reference>